<accession>A4XZ66</accession>
<sequence length="206" mass="23003">MARYIGPKCKLSRREGTDLFLKSGVRALESKCNIEAAPGIHGQRRGRQSDYGTQLREKQKVRRIYGVLERQFSGYYKQAASQKGATGENLLQLLECRLDNVVYRMGFGATRAESRQLVSHKAISVNGQTVNVPSYQVKAGDVVAVREKSKNQLRIAQALELCAQRGRVEWVEVDAEKKSGVFKNVPARGDLSADINESLIVELYSK</sequence>
<keyword id="KW-0687">Ribonucleoprotein</keyword>
<keyword id="KW-0689">Ribosomal protein</keyword>
<keyword id="KW-0694">RNA-binding</keyword>
<keyword id="KW-0699">rRNA-binding</keyword>
<protein>
    <recommendedName>
        <fullName evidence="1">Small ribosomal subunit protein uS4</fullName>
    </recommendedName>
    <alternativeName>
        <fullName evidence="2">30S ribosomal protein S4</fullName>
    </alternativeName>
</protein>
<gene>
    <name evidence="1" type="primary">rpsD</name>
    <name type="ordered locus">Pmen_3885</name>
</gene>
<dbReference type="EMBL" id="CP000680">
    <property type="protein sequence ID" value="ABP86632.1"/>
    <property type="molecule type" value="Genomic_DNA"/>
</dbReference>
<dbReference type="SMR" id="A4XZ66"/>
<dbReference type="STRING" id="399739.Pmen_3885"/>
<dbReference type="KEGG" id="pmy:Pmen_3885"/>
<dbReference type="eggNOG" id="COG0522">
    <property type="taxonomic scope" value="Bacteria"/>
</dbReference>
<dbReference type="HOGENOM" id="CLU_092403_0_2_6"/>
<dbReference type="OrthoDB" id="9803672at2"/>
<dbReference type="GO" id="GO:0015935">
    <property type="term" value="C:small ribosomal subunit"/>
    <property type="evidence" value="ECO:0007669"/>
    <property type="project" value="InterPro"/>
</dbReference>
<dbReference type="GO" id="GO:0019843">
    <property type="term" value="F:rRNA binding"/>
    <property type="evidence" value="ECO:0007669"/>
    <property type="project" value="UniProtKB-UniRule"/>
</dbReference>
<dbReference type="GO" id="GO:0003735">
    <property type="term" value="F:structural constituent of ribosome"/>
    <property type="evidence" value="ECO:0007669"/>
    <property type="project" value="InterPro"/>
</dbReference>
<dbReference type="GO" id="GO:0042274">
    <property type="term" value="P:ribosomal small subunit biogenesis"/>
    <property type="evidence" value="ECO:0007669"/>
    <property type="project" value="TreeGrafter"/>
</dbReference>
<dbReference type="GO" id="GO:0006412">
    <property type="term" value="P:translation"/>
    <property type="evidence" value="ECO:0007669"/>
    <property type="project" value="UniProtKB-UniRule"/>
</dbReference>
<dbReference type="CDD" id="cd00165">
    <property type="entry name" value="S4"/>
    <property type="match status" value="1"/>
</dbReference>
<dbReference type="FunFam" id="1.10.1050.10:FF:000001">
    <property type="entry name" value="30S ribosomal protein S4"/>
    <property type="match status" value="1"/>
</dbReference>
<dbReference type="FunFam" id="3.10.290.10:FF:000001">
    <property type="entry name" value="30S ribosomal protein S4"/>
    <property type="match status" value="1"/>
</dbReference>
<dbReference type="Gene3D" id="1.10.1050.10">
    <property type="entry name" value="Ribosomal Protein S4 Delta 41, Chain A, domain 1"/>
    <property type="match status" value="1"/>
</dbReference>
<dbReference type="Gene3D" id="3.10.290.10">
    <property type="entry name" value="RNA-binding S4 domain"/>
    <property type="match status" value="1"/>
</dbReference>
<dbReference type="HAMAP" id="MF_01306_B">
    <property type="entry name" value="Ribosomal_uS4_B"/>
    <property type="match status" value="1"/>
</dbReference>
<dbReference type="InterPro" id="IPR022801">
    <property type="entry name" value="Ribosomal_uS4"/>
</dbReference>
<dbReference type="InterPro" id="IPR005709">
    <property type="entry name" value="Ribosomal_uS4_bac-type"/>
</dbReference>
<dbReference type="InterPro" id="IPR018079">
    <property type="entry name" value="Ribosomal_uS4_CS"/>
</dbReference>
<dbReference type="InterPro" id="IPR001912">
    <property type="entry name" value="Ribosomal_uS4_N"/>
</dbReference>
<dbReference type="InterPro" id="IPR002942">
    <property type="entry name" value="S4_RNA-bd"/>
</dbReference>
<dbReference type="InterPro" id="IPR036986">
    <property type="entry name" value="S4_RNA-bd_sf"/>
</dbReference>
<dbReference type="NCBIfam" id="NF003717">
    <property type="entry name" value="PRK05327.1"/>
    <property type="match status" value="1"/>
</dbReference>
<dbReference type="NCBIfam" id="TIGR01017">
    <property type="entry name" value="rpsD_bact"/>
    <property type="match status" value="1"/>
</dbReference>
<dbReference type="PANTHER" id="PTHR11831">
    <property type="entry name" value="30S 40S RIBOSOMAL PROTEIN"/>
    <property type="match status" value="1"/>
</dbReference>
<dbReference type="PANTHER" id="PTHR11831:SF4">
    <property type="entry name" value="SMALL RIBOSOMAL SUBUNIT PROTEIN US4M"/>
    <property type="match status" value="1"/>
</dbReference>
<dbReference type="Pfam" id="PF00163">
    <property type="entry name" value="Ribosomal_S4"/>
    <property type="match status" value="1"/>
</dbReference>
<dbReference type="Pfam" id="PF01479">
    <property type="entry name" value="S4"/>
    <property type="match status" value="1"/>
</dbReference>
<dbReference type="SMART" id="SM01390">
    <property type="entry name" value="Ribosomal_S4"/>
    <property type="match status" value="1"/>
</dbReference>
<dbReference type="SMART" id="SM00363">
    <property type="entry name" value="S4"/>
    <property type="match status" value="1"/>
</dbReference>
<dbReference type="SUPFAM" id="SSF55174">
    <property type="entry name" value="Alpha-L RNA-binding motif"/>
    <property type="match status" value="1"/>
</dbReference>
<dbReference type="PROSITE" id="PS00632">
    <property type="entry name" value="RIBOSOMAL_S4"/>
    <property type="match status" value="1"/>
</dbReference>
<dbReference type="PROSITE" id="PS50889">
    <property type="entry name" value="S4"/>
    <property type="match status" value="1"/>
</dbReference>
<feature type="chain" id="PRO_0000322320" description="Small ribosomal subunit protein uS4">
    <location>
        <begin position="1"/>
        <end position="206"/>
    </location>
</feature>
<feature type="domain" description="S4 RNA-binding" evidence="1">
    <location>
        <begin position="96"/>
        <end position="156"/>
    </location>
</feature>
<name>RS4_ECTM1</name>
<reference key="1">
    <citation type="submission" date="2007-04" db="EMBL/GenBank/DDBJ databases">
        <title>Complete sequence of Pseudomonas mendocina ymp.</title>
        <authorList>
            <consortium name="US DOE Joint Genome Institute"/>
            <person name="Copeland A."/>
            <person name="Lucas S."/>
            <person name="Lapidus A."/>
            <person name="Barry K."/>
            <person name="Glavina del Rio T."/>
            <person name="Dalin E."/>
            <person name="Tice H."/>
            <person name="Pitluck S."/>
            <person name="Kiss H."/>
            <person name="Brettin T."/>
            <person name="Detter J.C."/>
            <person name="Bruce D."/>
            <person name="Han C."/>
            <person name="Schmutz J."/>
            <person name="Larimer F."/>
            <person name="Land M."/>
            <person name="Hauser L."/>
            <person name="Kyrpides N."/>
            <person name="Mikhailova N."/>
            <person name="Hersman L."/>
            <person name="Dubois J."/>
            <person name="Maurice P."/>
            <person name="Richardson P."/>
        </authorList>
    </citation>
    <scope>NUCLEOTIDE SEQUENCE [LARGE SCALE GENOMIC DNA]</scope>
    <source>
        <strain>ymp</strain>
    </source>
</reference>
<organism>
    <name type="scientific">Ectopseudomonas mendocina (strain ymp)</name>
    <name type="common">Pseudomonas mendocina</name>
    <dbReference type="NCBI Taxonomy" id="399739"/>
    <lineage>
        <taxon>Bacteria</taxon>
        <taxon>Pseudomonadati</taxon>
        <taxon>Pseudomonadota</taxon>
        <taxon>Gammaproteobacteria</taxon>
        <taxon>Pseudomonadales</taxon>
        <taxon>Pseudomonadaceae</taxon>
        <taxon>Ectopseudomonas</taxon>
    </lineage>
</organism>
<comment type="function">
    <text evidence="1">One of the primary rRNA binding proteins, it binds directly to 16S rRNA where it nucleates assembly of the body of the 30S subunit.</text>
</comment>
<comment type="function">
    <text evidence="1">With S5 and S12 plays an important role in translational accuracy.</text>
</comment>
<comment type="subunit">
    <text evidence="1">Part of the 30S ribosomal subunit. Contacts protein S5. The interaction surface between S4 and S5 is involved in control of translational fidelity.</text>
</comment>
<comment type="similarity">
    <text evidence="1">Belongs to the universal ribosomal protein uS4 family.</text>
</comment>
<proteinExistence type="inferred from homology"/>
<evidence type="ECO:0000255" key="1">
    <source>
        <dbReference type="HAMAP-Rule" id="MF_01306"/>
    </source>
</evidence>
<evidence type="ECO:0000305" key="2"/>